<protein>
    <recommendedName>
        <fullName evidence="1">Outer-membrane lipoprotein carrier protein</fullName>
    </recommendedName>
</protein>
<sequence length="209" mass="23563">MKNLLKKSLLGLAFLSLNGFAFADAQAVAELQQRLDKAMQYSADFEQTVRSSKGKEIQKGQGKFQVKRPNLFRMDTQSPQENLIVSDGKTLWFYDPFVSQVTANWVKDAVSNTPFVLLTSNDKSHWDQYDVTQNVDNFVLKPKSKKSAIKQFDIRIDATGLVKGFSTIERDGQSNLYVLRNISTAHLSESLFSFSVPKGAELDDQRGKK</sequence>
<evidence type="ECO:0000255" key="1">
    <source>
        <dbReference type="HAMAP-Rule" id="MF_00240"/>
    </source>
</evidence>
<comment type="function">
    <text evidence="1">Participates in the translocation of lipoproteins from the inner membrane to the outer membrane. Only forms a complex with a lipoprotein if the residue after the N-terminal Cys is not an aspartate (The Asp acts as a targeting signal to indicate that the lipoprotein should stay in the inner membrane).</text>
</comment>
<comment type="subunit">
    <text evidence="1">Monomer.</text>
</comment>
<comment type="subcellular location">
    <subcellularLocation>
        <location evidence="1">Periplasm</location>
    </subcellularLocation>
</comment>
<comment type="similarity">
    <text evidence="1">Belongs to the LolA family.</text>
</comment>
<keyword id="KW-0143">Chaperone</keyword>
<keyword id="KW-0574">Periplasm</keyword>
<keyword id="KW-0653">Protein transport</keyword>
<keyword id="KW-1185">Reference proteome</keyword>
<keyword id="KW-0732">Signal</keyword>
<keyword id="KW-0813">Transport</keyword>
<name>LOLA_GLAP5</name>
<gene>
    <name evidence="1" type="primary">lolA</name>
    <name type="ordered locus">HAPS_0250</name>
</gene>
<accession>B8F3N7</accession>
<dbReference type="EMBL" id="CP001321">
    <property type="protein sequence ID" value="ACL31939.1"/>
    <property type="molecule type" value="Genomic_DNA"/>
</dbReference>
<dbReference type="RefSeq" id="WP_005710805.1">
    <property type="nucleotide sequence ID" value="NC_011852.1"/>
</dbReference>
<dbReference type="SMR" id="B8F3N7"/>
<dbReference type="STRING" id="557723.HAPS_0250"/>
<dbReference type="KEGG" id="hap:HAPS_0250"/>
<dbReference type="HOGENOM" id="CLU_087560_1_1_6"/>
<dbReference type="Proteomes" id="UP000006743">
    <property type="component" value="Chromosome"/>
</dbReference>
<dbReference type="GO" id="GO:0030288">
    <property type="term" value="C:outer membrane-bounded periplasmic space"/>
    <property type="evidence" value="ECO:0007669"/>
    <property type="project" value="TreeGrafter"/>
</dbReference>
<dbReference type="GO" id="GO:0044874">
    <property type="term" value="P:lipoprotein localization to outer membrane"/>
    <property type="evidence" value="ECO:0007669"/>
    <property type="project" value="UniProtKB-UniRule"/>
</dbReference>
<dbReference type="GO" id="GO:0042953">
    <property type="term" value="P:lipoprotein transport"/>
    <property type="evidence" value="ECO:0007669"/>
    <property type="project" value="InterPro"/>
</dbReference>
<dbReference type="CDD" id="cd16325">
    <property type="entry name" value="LolA"/>
    <property type="match status" value="1"/>
</dbReference>
<dbReference type="Gene3D" id="2.50.20.10">
    <property type="entry name" value="Lipoprotein localisation LolA/LolB/LppX"/>
    <property type="match status" value="1"/>
</dbReference>
<dbReference type="HAMAP" id="MF_00240">
    <property type="entry name" value="LolA"/>
    <property type="match status" value="1"/>
</dbReference>
<dbReference type="InterPro" id="IPR029046">
    <property type="entry name" value="LolA/LolB/LppX"/>
</dbReference>
<dbReference type="InterPro" id="IPR004564">
    <property type="entry name" value="OM_lipoprot_carrier_LolA-like"/>
</dbReference>
<dbReference type="InterPro" id="IPR018323">
    <property type="entry name" value="OM_lipoprot_carrier_LolA_Pbac"/>
</dbReference>
<dbReference type="NCBIfam" id="TIGR00547">
    <property type="entry name" value="lolA"/>
    <property type="match status" value="1"/>
</dbReference>
<dbReference type="PANTHER" id="PTHR35869">
    <property type="entry name" value="OUTER-MEMBRANE LIPOPROTEIN CARRIER PROTEIN"/>
    <property type="match status" value="1"/>
</dbReference>
<dbReference type="PANTHER" id="PTHR35869:SF1">
    <property type="entry name" value="OUTER-MEMBRANE LIPOPROTEIN CARRIER PROTEIN"/>
    <property type="match status" value="1"/>
</dbReference>
<dbReference type="Pfam" id="PF03548">
    <property type="entry name" value="LolA"/>
    <property type="match status" value="1"/>
</dbReference>
<dbReference type="SUPFAM" id="SSF89392">
    <property type="entry name" value="Prokaryotic lipoproteins and lipoprotein localization factors"/>
    <property type="match status" value="1"/>
</dbReference>
<organism>
    <name type="scientific">Glaesserella parasuis serovar 5 (strain SH0165)</name>
    <name type="common">Haemophilus parasuis</name>
    <dbReference type="NCBI Taxonomy" id="557723"/>
    <lineage>
        <taxon>Bacteria</taxon>
        <taxon>Pseudomonadati</taxon>
        <taxon>Pseudomonadota</taxon>
        <taxon>Gammaproteobacteria</taxon>
        <taxon>Pasteurellales</taxon>
        <taxon>Pasteurellaceae</taxon>
        <taxon>Glaesserella</taxon>
    </lineage>
</organism>
<reference key="1">
    <citation type="journal article" date="2009" name="J. Bacteriol.">
        <title>Complete genome sequence of Haemophilus parasuis SH0165.</title>
        <authorList>
            <person name="Yue M."/>
            <person name="Yang F."/>
            <person name="Yang J."/>
            <person name="Bei W."/>
            <person name="Cai X."/>
            <person name="Chen L."/>
            <person name="Dong J."/>
            <person name="Zhou R."/>
            <person name="Jin M."/>
            <person name="Jin Q."/>
            <person name="Chen H."/>
        </authorList>
    </citation>
    <scope>NUCLEOTIDE SEQUENCE [LARGE SCALE GENOMIC DNA]</scope>
    <source>
        <strain>SH0165</strain>
    </source>
</reference>
<feature type="signal peptide" evidence="1">
    <location>
        <begin position="1"/>
        <end position="23"/>
    </location>
</feature>
<feature type="chain" id="PRO_1000125313" description="Outer-membrane lipoprotein carrier protein">
    <location>
        <begin position="24"/>
        <end position="209"/>
    </location>
</feature>
<proteinExistence type="inferred from homology"/>